<protein>
    <recommendedName>
        <fullName evidence="13">DNA-directed RNA polymerase I subunit RPA34</fullName>
    </recommendedName>
    <alternativeName>
        <fullName>A34.5</fullName>
    </alternativeName>
    <alternativeName>
        <fullName evidence="12">Antisense to ERCC-1 protein</fullName>
        <shortName evidence="12">ASE-1</shortName>
    </alternativeName>
    <alternativeName>
        <fullName evidence="10">CD3-epsilon-associated protein</fullName>
        <shortName evidence="10">CD3E-associated protein</shortName>
    </alternativeName>
    <alternativeName>
        <fullName evidence="15">DNA-directed RNA polymerase I subunit G</fullName>
    </alternativeName>
    <alternativeName>
        <fullName evidence="14">RNA polymerase I-associated factor PAF49</fullName>
    </alternativeName>
</protein>
<gene>
    <name evidence="15" type="primary">POLR1G</name>
    <name evidence="12" type="synonym">ASE1</name>
    <name evidence="10" type="synonym">CAST</name>
    <name evidence="15" type="synonym">CD3EAP</name>
    <name evidence="11" type="synonym">PAF49</name>
</gene>
<comment type="function">
    <text evidence="6 7 8">Component of RNA polymerase I (Pol I), a DNA-dependent RNA polymerase which synthesizes ribosomal RNA precursors using the four ribonucleoside triphosphates as substrates. Involved in UBTF-activated transcription, presumably at a step following PIC formation.</text>
</comment>
<comment type="function">
    <molecule>Isoform 2</molecule>
    <text evidence="3">Has been described as a component of preformed T-cell receptor (TCR) complex.</text>
</comment>
<comment type="subunit">
    <text evidence="1 5 6 7 8">Component of the RNA polymerase I (Pol I) complex consisting of 13 subunits: a ten-subunit catalytic core composed of POLR1A/RPA1, POLR1B/RPA2, POLR1C/RPAC1, POLR1D/RPAC2, POLR1H/RPA12, POLR2E/RPABC1, POLR2F/RPABC2, POLR2H/RPABC3, POLR2K/RPABC4 and POLR2L/RPABC5; a mobile stalk subunit POLR1F/RPA43 protruding from the core and additional subunits homologous to general transcription factors POLR1E/RPA49 and POLR1G/RPA34. Forms a heterodimer with POLR1E/RPA49 (PubMed:34671025, PubMed:34887565, PubMed:36271492). Part of Pol I pre-initiation complex (PIC), in which Pol I core assembles with RRN3 and promoter-bound UTBF and SL1/TIF-IB complex. Interacts with TAF1A thereby associates with the SL1/TIF-IB complex. Interacts with UBTF (PubMed:16809778, PubMed:34887565). Interacts with POLR1E/PRAF1 through its N-terminal region (By similarity).</text>
</comment>
<comment type="subunit">
    <molecule>Isoform 2</molecule>
    <text evidence="3">Interacts with CD3E.</text>
</comment>
<comment type="subcellular location">
    <subcellularLocation>
        <location evidence="9">Nucleus</location>
        <location evidence="9">Nucleolus</location>
    </subcellularLocation>
    <subcellularLocation>
        <location evidence="9">Chromosome</location>
    </subcellularLocation>
    <text>Found at the fibrillar centers of the nucleolus in interphase and during cell division it is localized to the nucleolus organizer regions of the chromosomes.</text>
</comment>
<comment type="alternative products">
    <event type="alternative splicing"/>
    <isoform>
        <id>O15446-1</id>
        <name>1</name>
        <sequence type="displayed"/>
    </isoform>
    <isoform>
        <id>O15446-2</id>
        <name>2</name>
        <name>CAST</name>
        <sequence type="described" ref="VSP_017673"/>
    </isoform>
</comment>
<comment type="PTM">
    <molecule>Isoform 2</molecule>
    <text evidence="3">Undergoes tyrosine phosphorylation upon T-cell receptor (TCR) stimulation. This phosphorylation has not been confirmed by other groups.</text>
</comment>
<comment type="PTM">
    <molecule>Isoform 1</molecule>
    <text evidence="5">Phosphorylated on tyrosine residues in initiation-competent Pol I-beta complexes but not in Pol I-alpha complexes.</text>
</comment>
<comment type="miscellaneous">
    <text>It is in an antisense orientation to and overlaps the gene of the DNA repair enzyme ERCC1. This gene overlap is conserved in mouse, suggesting an important biological function.</text>
</comment>
<comment type="miscellaneous">
    <molecule>Isoform 2</molecule>
    <text evidence="13">Has sharply different functional characteristics.</text>
</comment>
<comment type="similarity">
    <text evidence="13">Belongs to the eukaryotic RPA34 RNA polymerase subunit family.</text>
</comment>
<comment type="caution">
    <text evidence="13">It is not known whether the so-called human ASE1 and human CAST proteins represent two sides of a single gene product with sharply different functional characteristics. Experiments done with the mouse homolog protein are in favor of an implication of this gene in rRNA transcription instead of T-cell receptor signaling.</text>
</comment>
<feature type="chain" id="PRO_0000228120" description="DNA-directed RNA polymerase I subunit RPA34">
    <location>
        <begin position="1"/>
        <end position="510"/>
    </location>
</feature>
<feature type="region of interest" description="Disordered" evidence="2">
    <location>
        <begin position="1"/>
        <end position="31"/>
    </location>
</feature>
<feature type="region of interest" description="Disordered" evidence="2">
    <location>
        <begin position="120"/>
        <end position="143"/>
    </location>
</feature>
<feature type="region of interest" description="Disordered" evidence="2">
    <location>
        <begin position="203"/>
        <end position="510"/>
    </location>
</feature>
<feature type="compositionally biased region" description="Pro residues" evidence="2">
    <location>
        <begin position="131"/>
        <end position="143"/>
    </location>
</feature>
<feature type="compositionally biased region" description="Basic and acidic residues" evidence="2">
    <location>
        <begin position="258"/>
        <end position="270"/>
    </location>
</feature>
<feature type="compositionally biased region" description="Low complexity" evidence="2">
    <location>
        <begin position="372"/>
        <end position="382"/>
    </location>
</feature>
<feature type="compositionally biased region" description="Low complexity" evidence="2">
    <location>
        <begin position="394"/>
        <end position="407"/>
    </location>
</feature>
<feature type="compositionally biased region" description="Basic residues" evidence="2">
    <location>
        <begin position="421"/>
        <end position="430"/>
    </location>
</feature>
<feature type="compositionally biased region" description="Low complexity" evidence="2">
    <location>
        <begin position="436"/>
        <end position="452"/>
    </location>
</feature>
<feature type="modified residue" description="N-acetylmethionine" evidence="18 22">
    <location>
        <position position="1"/>
    </location>
</feature>
<feature type="modified residue" description="Phosphoserine" evidence="17">
    <location>
        <position position="27"/>
    </location>
</feature>
<feature type="modified residue" description="Phosphotyrosine" evidence="5">
    <location>
        <position position="80"/>
    </location>
</feature>
<feature type="modified residue" description="Phosphoserine" evidence="17 23">
    <location>
        <position position="128"/>
    </location>
</feature>
<feature type="modified residue" description="Phosphoserine" evidence="17 19 21 23">
    <location>
        <position position="136"/>
    </location>
</feature>
<feature type="modified residue" description="Phosphoserine" evidence="17 20 23">
    <location>
        <position position="172"/>
    </location>
</feature>
<feature type="modified residue" description="Phosphoserine" evidence="17">
    <location>
        <position position="205"/>
    </location>
</feature>
<feature type="modified residue" description="Phosphoserine" evidence="17 20 23">
    <location>
        <position position="285"/>
    </location>
</feature>
<feature type="modified residue" description="Phosphothreonine" evidence="17 23">
    <location>
        <position position="287"/>
    </location>
</feature>
<feature type="modified residue" description="Phosphoserine" evidence="16">
    <location>
        <position position="309"/>
    </location>
</feature>
<feature type="modified residue" description="Phosphoserine" evidence="19">
    <location>
        <position position="490"/>
    </location>
</feature>
<feature type="cross-link" description="Glycyl lysine isopeptide (Lys-Gly) (interchain with G-Cter in SUMO1); alternate" evidence="24">
    <location>
        <position position="270"/>
    </location>
</feature>
<feature type="cross-link" description="Glycyl lysine isopeptide (Lys-Gly) (interchain with G-Cter in SUMO2); alternate" evidence="25 26 27 28">
    <location>
        <position position="270"/>
    </location>
</feature>
<feature type="cross-link" description="Glycyl lysine isopeptide (Lys-Gly) (interchain with G-Cter in SUMO1); alternate" evidence="24">
    <location>
        <position position="314"/>
    </location>
</feature>
<feature type="cross-link" description="Glycyl lysine isopeptide (Lys-Gly) (interchain with G-Cter in SUMO2); alternate" evidence="25 26 28">
    <location>
        <position position="314"/>
    </location>
</feature>
<feature type="splice variant" id="VSP_017673" description="In isoform 2." evidence="10">
    <original>G</original>
    <variation>GGE</variation>
    <location>
        <position position="7"/>
    </location>
</feature>
<feature type="sequence variant" id="VAR_051875" description="In dbSNP:rs735482.">
    <original>K</original>
    <variation>T</variation>
    <location>
        <position position="259"/>
    </location>
</feature>
<feature type="sequence variant" id="VAR_051876" description="In dbSNP:rs3212989.">
    <original>T</original>
    <variation>A</variation>
    <location>
        <position position="282"/>
    </location>
</feature>
<feature type="sequence variant" id="VAR_051877" description="In dbSNP:rs762562.">
    <original>K</original>
    <variation>E</variation>
    <location>
        <position position="373"/>
    </location>
</feature>
<feature type="sequence variant" id="VAR_051878" description="In dbSNP:rs2336219.">
    <original>D</original>
    <variation>N</variation>
    <location>
        <position position="394"/>
    </location>
</feature>
<feature type="sequence variant" id="VAR_051879" description="In dbSNP:rs3212986.">
    <original>K</original>
    <variation>Q</variation>
    <location>
        <position position="503"/>
    </location>
</feature>
<feature type="sequence variant" id="VAR_051880" description="In dbSNP:rs3212986." evidence="4">
    <original>Q</original>
    <variation>K</variation>
    <location>
        <position position="504"/>
    </location>
</feature>
<feature type="sequence conflict" description="In Ref. 3; AAH54044." evidence="13" ref="3">
    <original>N</original>
    <variation>K</variation>
    <location>
        <position position="218"/>
    </location>
</feature>
<feature type="sequence conflict" description="In Ref. 3; AAI08890." evidence="13" ref="3">
    <location>
        <position position="422"/>
    </location>
</feature>
<feature type="strand" evidence="29">
    <location>
        <begin position="22"/>
        <end position="26"/>
    </location>
</feature>
<feature type="strand" evidence="29">
    <location>
        <begin position="38"/>
        <end position="47"/>
    </location>
</feature>
<feature type="turn" evidence="29">
    <location>
        <begin position="53"/>
        <end position="58"/>
    </location>
</feature>
<feature type="strand" evidence="29">
    <location>
        <begin position="59"/>
        <end position="68"/>
    </location>
</feature>
<feature type="strand" evidence="29">
    <location>
        <begin position="73"/>
        <end position="75"/>
    </location>
</feature>
<feature type="strand" evidence="29">
    <location>
        <begin position="80"/>
        <end position="85"/>
    </location>
</feature>
<feature type="strand" evidence="29">
    <location>
        <begin position="93"/>
        <end position="96"/>
    </location>
</feature>
<feature type="turn" evidence="29">
    <location>
        <begin position="99"/>
        <end position="103"/>
    </location>
</feature>
<feature type="strand" evidence="29">
    <location>
        <begin position="113"/>
        <end position="119"/>
    </location>
</feature>
<feature type="strand" evidence="30">
    <location>
        <begin position="123"/>
        <end position="127"/>
    </location>
</feature>
<accession>O15446</accession>
<accession>Q32N11</accession>
<accession>Q7Z5U2</accession>
<accession>Q9UPF6</accession>
<proteinExistence type="evidence at protein level"/>
<reference key="1">
    <citation type="journal article" date="1997" name="Chromosoma">
        <title>ASE-1: a novel protein of the fibrillar centres of the nucleolus and nucleolus organizer region of mitotic chromosomes.</title>
        <authorList>
            <person name="Whitehead C.M."/>
            <person name="Winkfein R.J."/>
            <person name="Fritzler M.J."/>
            <person name="Rattner J.B."/>
        </authorList>
    </citation>
    <scope>NUCLEOTIDE SEQUENCE [MRNA] (ISOFORM 1)</scope>
    <scope>SUBCELLULAR LOCATION</scope>
    <source>
        <tissue>Serum</tissue>
    </source>
</reference>
<reference key="2">
    <citation type="journal article" date="1999" name="J. Biol. Chem.">
        <title>CAST, a novel CD3epsilon-binding protein transducing activation signal for interleukin-2 production in T cells.</title>
        <authorList>
            <person name="Yamazaki T."/>
            <person name="Hamano Y."/>
            <person name="Tashiro H."/>
            <person name="Itoh K."/>
            <person name="Nakano H."/>
            <person name="Miyatake S."/>
            <person name="Saito T."/>
        </authorList>
    </citation>
    <scope>NUCLEOTIDE SEQUENCE [MRNA] (ISOFORM 2)</scope>
    <scope>FUNCTION IN T-CELL RECEPTOR SIGNALING (ISOFORM 2)</scope>
    <scope>PHOSPHORYLATION</scope>
    <scope>INTERACTION WITH CD3E (ISOFORM 2)</scope>
</reference>
<reference key="3">
    <citation type="journal article" date="2004" name="Genome Res.">
        <title>The status, quality, and expansion of the NIH full-length cDNA project: the Mammalian Gene Collection (MGC).</title>
        <authorList>
            <consortium name="The MGC Project Team"/>
        </authorList>
    </citation>
    <scope>NUCLEOTIDE SEQUENCE [LARGE SCALE MRNA] (ISOFORM 1)</scope>
    <scope>VARIANT LYS-504</scope>
    <source>
        <tissue>Skin</tissue>
        <tissue>Testis</tissue>
    </source>
</reference>
<reference key="4">
    <citation type="journal article" date="2006" name="Cell">
        <title>Global, in vivo, and site-specific phosphorylation dynamics in signaling networks.</title>
        <authorList>
            <person name="Olsen J.V."/>
            <person name="Blagoev B."/>
            <person name="Gnad F."/>
            <person name="Macek B."/>
            <person name="Kumar C."/>
            <person name="Mortensen P."/>
            <person name="Mann M."/>
        </authorList>
    </citation>
    <scope>IDENTIFICATION BY MASS SPECTROMETRY [LARGE SCALE ANALYSIS]</scope>
    <source>
        <tissue>Cervix carcinoma</tissue>
    </source>
</reference>
<reference key="5">
    <citation type="journal article" date="2006" name="Mol. Cell. Biol.">
        <title>RNA polymerase I-specific subunit CAST/hPAF49 has a role in the activation of transcription by upstream binding factor.</title>
        <authorList>
            <person name="Panov K.I."/>
            <person name="Panova T.B."/>
            <person name="Gadal O."/>
            <person name="Nishiyama K."/>
            <person name="Saito T."/>
            <person name="Russell J."/>
            <person name="Zomerdijk J.C.B.M."/>
        </authorList>
    </citation>
    <scope>IDENTIFICATION IN THE RNA POL I COMPLEX (ISOFORM 1)</scope>
    <scope>IDENTIFICATION BY MASS SPECTROMETRY</scope>
    <scope>FUNCTION</scope>
    <scope>INTERACTION WITH TAF1A AND UBTF</scope>
    <scope>PHOSPHORYLATION AT TYR-80</scope>
</reference>
<reference key="6">
    <citation type="journal article" date="2007" name="Science">
        <title>ATM and ATR substrate analysis reveals extensive protein networks responsive to DNA damage.</title>
        <authorList>
            <person name="Matsuoka S."/>
            <person name="Ballif B.A."/>
            <person name="Smogorzewska A."/>
            <person name="McDonald E.R. III"/>
            <person name="Hurov K.E."/>
            <person name="Luo J."/>
            <person name="Bakalarski C.E."/>
            <person name="Zhao Z."/>
            <person name="Solimini N."/>
            <person name="Lerenthal Y."/>
            <person name="Shiloh Y."/>
            <person name="Gygi S.P."/>
            <person name="Elledge S.J."/>
        </authorList>
    </citation>
    <scope>PHOSPHORYLATION [LARGE SCALE ANALYSIS] AT SER-309</scope>
    <scope>IDENTIFICATION BY MASS SPECTROMETRY [LARGE SCALE ANALYSIS]</scope>
    <source>
        <tissue>Embryonic kidney</tissue>
    </source>
</reference>
<reference key="7">
    <citation type="journal article" date="2008" name="Proc. Natl. Acad. Sci. U.S.A.">
        <title>A quantitative atlas of mitotic phosphorylation.</title>
        <authorList>
            <person name="Dephoure N."/>
            <person name="Zhou C."/>
            <person name="Villen J."/>
            <person name="Beausoleil S.A."/>
            <person name="Bakalarski C.E."/>
            <person name="Elledge S.J."/>
            <person name="Gygi S.P."/>
        </authorList>
    </citation>
    <scope>PHOSPHORYLATION [LARGE SCALE ANALYSIS] AT SER-27; SER-128; SER-136; SER-172; SER-205; SER-285 AND THR-287</scope>
    <scope>IDENTIFICATION BY MASS SPECTROMETRY [LARGE SCALE ANALYSIS]</scope>
    <source>
        <tissue>Cervix carcinoma</tissue>
    </source>
</reference>
<reference key="8">
    <citation type="journal article" date="2009" name="Anal. Chem.">
        <title>Lys-N and trypsin cover complementary parts of the phosphoproteome in a refined SCX-based approach.</title>
        <authorList>
            <person name="Gauci S."/>
            <person name="Helbig A.O."/>
            <person name="Slijper M."/>
            <person name="Krijgsveld J."/>
            <person name="Heck A.J."/>
            <person name="Mohammed S."/>
        </authorList>
    </citation>
    <scope>ACETYLATION [LARGE SCALE ANALYSIS] AT MET-1</scope>
    <scope>IDENTIFICATION BY MASS SPECTROMETRY [LARGE SCALE ANALYSIS]</scope>
</reference>
<reference key="9">
    <citation type="journal article" date="2009" name="Sci. Signal.">
        <title>Quantitative phosphoproteomic analysis of T cell receptor signaling reveals system-wide modulation of protein-protein interactions.</title>
        <authorList>
            <person name="Mayya V."/>
            <person name="Lundgren D.H."/>
            <person name="Hwang S.-I."/>
            <person name="Rezaul K."/>
            <person name="Wu L."/>
            <person name="Eng J.K."/>
            <person name="Rodionov V."/>
            <person name="Han D.K."/>
        </authorList>
    </citation>
    <scope>PHOSPHORYLATION [LARGE SCALE ANALYSIS] AT SER-136 AND SER-490</scope>
    <scope>IDENTIFICATION BY MASS SPECTROMETRY [LARGE SCALE ANALYSIS]</scope>
    <source>
        <tissue>Leukemic T-cell</tissue>
    </source>
</reference>
<reference key="10">
    <citation type="journal article" date="2010" name="Sci. Signal.">
        <title>Quantitative phosphoproteomics reveals widespread full phosphorylation site occupancy during mitosis.</title>
        <authorList>
            <person name="Olsen J.V."/>
            <person name="Vermeulen M."/>
            <person name="Santamaria A."/>
            <person name="Kumar C."/>
            <person name="Miller M.L."/>
            <person name="Jensen L.J."/>
            <person name="Gnad F."/>
            <person name="Cox J."/>
            <person name="Jensen T.S."/>
            <person name="Nigg E.A."/>
            <person name="Brunak S."/>
            <person name="Mann M."/>
        </authorList>
    </citation>
    <scope>PHOSPHORYLATION [LARGE SCALE ANALYSIS] AT SER-172 AND SER-285</scope>
    <scope>IDENTIFICATION BY MASS SPECTROMETRY [LARGE SCALE ANALYSIS]</scope>
    <source>
        <tissue>Cervix carcinoma</tissue>
    </source>
</reference>
<reference key="11">
    <citation type="journal article" date="2011" name="Sci. Signal.">
        <title>System-wide temporal characterization of the proteome and phosphoproteome of human embryonic stem cell differentiation.</title>
        <authorList>
            <person name="Rigbolt K.T."/>
            <person name="Prokhorova T.A."/>
            <person name="Akimov V."/>
            <person name="Henningsen J."/>
            <person name="Johansen P.T."/>
            <person name="Kratchmarova I."/>
            <person name="Kassem M."/>
            <person name="Mann M."/>
            <person name="Olsen J.V."/>
            <person name="Blagoev B."/>
        </authorList>
    </citation>
    <scope>PHOSPHORYLATION [LARGE SCALE ANALYSIS] AT SER-136</scope>
    <scope>IDENTIFICATION BY MASS SPECTROMETRY [LARGE SCALE ANALYSIS]</scope>
</reference>
<reference key="12">
    <citation type="journal article" date="2012" name="Proc. Natl. Acad. Sci. U.S.A.">
        <title>N-terminal acetylome analyses and functional insights of the N-terminal acetyltransferase NatB.</title>
        <authorList>
            <person name="Van Damme P."/>
            <person name="Lasa M."/>
            <person name="Polevoda B."/>
            <person name="Gazquez C."/>
            <person name="Elosegui-Artola A."/>
            <person name="Kim D.S."/>
            <person name="De Juan-Pardo E."/>
            <person name="Demeyer K."/>
            <person name="Hole K."/>
            <person name="Larrea E."/>
            <person name="Timmerman E."/>
            <person name="Prieto J."/>
            <person name="Arnesen T."/>
            <person name="Sherman F."/>
            <person name="Gevaert K."/>
            <person name="Aldabe R."/>
        </authorList>
    </citation>
    <scope>ACETYLATION [LARGE SCALE ANALYSIS] AT MET-1</scope>
    <scope>IDENTIFICATION BY MASS SPECTROMETRY [LARGE SCALE ANALYSIS]</scope>
</reference>
<reference key="13">
    <citation type="journal article" date="2013" name="J. Proteome Res.">
        <title>Toward a comprehensive characterization of a human cancer cell phosphoproteome.</title>
        <authorList>
            <person name="Zhou H."/>
            <person name="Di Palma S."/>
            <person name="Preisinger C."/>
            <person name="Peng M."/>
            <person name="Polat A.N."/>
            <person name="Heck A.J."/>
            <person name="Mohammed S."/>
        </authorList>
    </citation>
    <scope>PHOSPHORYLATION [LARGE SCALE ANALYSIS] AT SER-128; SER-136; SER-172; SER-285 AND THR-287</scope>
    <scope>IDENTIFICATION BY MASS SPECTROMETRY [LARGE SCALE ANALYSIS]</scope>
    <source>
        <tissue>Cervix carcinoma</tissue>
        <tissue>Erythroleukemia</tissue>
    </source>
</reference>
<reference key="14">
    <citation type="journal article" date="2014" name="J. Proteomics">
        <title>An enzyme assisted RP-RPLC approach for in-depth analysis of human liver phosphoproteome.</title>
        <authorList>
            <person name="Bian Y."/>
            <person name="Song C."/>
            <person name="Cheng K."/>
            <person name="Dong M."/>
            <person name="Wang F."/>
            <person name="Huang J."/>
            <person name="Sun D."/>
            <person name="Wang L."/>
            <person name="Ye M."/>
            <person name="Zou H."/>
        </authorList>
    </citation>
    <scope>IDENTIFICATION BY MASS SPECTROMETRY [LARGE SCALE ANALYSIS]</scope>
    <source>
        <tissue>Liver</tissue>
    </source>
</reference>
<reference key="15">
    <citation type="journal article" date="2014" name="Nat. Struct. Mol. Biol.">
        <title>Uncovering global SUMOylation signaling networks in a site-specific manner.</title>
        <authorList>
            <person name="Hendriks I.A."/>
            <person name="D'Souza R.C."/>
            <person name="Yang B."/>
            <person name="Verlaan-de Vries M."/>
            <person name="Mann M."/>
            <person name="Vertegaal A.C."/>
        </authorList>
    </citation>
    <scope>SUMOYLATION [LARGE SCALE ANALYSIS] AT LYS-270 AND LYS-314</scope>
    <scope>IDENTIFICATION BY MASS SPECTROMETRY [LARGE SCALE ANALYSIS]</scope>
</reference>
<reference key="16">
    <citation type="journal article" date="2014" name="Proc. Natl. Acad. Sci. U.S.A.">
        <title>Mapping of SUMO sites and analysis of SUMOylation changes induced by external stimuli.</title>
        <authorList>
            <person name="Impens F."/>
            <person name="Radoshevich L."/>
            <person name="Cossart P."/>
            <person name="Ribet D."/>
        </authorList>
    </citation>
    <scope>SUMOYLATION [LARGE SCALE ANALYSIS] AT LYS-270 AND LYS-314</scope>
    <scope>IDENTIFICATION BY MASS SPECTROMETRY [LARGE SCALE ANALYSIS]</scope>
</reference>
<reference key="17">
    <citation type="journal article" date="2015" name="Cell Rep.">
        <title>SUMO-2 orchestrates chromatin modifiers in response to DNA damage.</title>
        <authorList>
            <person name="Hendriks I.A."/>
            <person name="Treffers L.W."/>
            <person name="Verlaan-de Vries M."/>
            <person name="Olsen J.V."/>
            <person name="Vertegaal A.C."/>
        </authorList>
    </citation>
    <scope>SUMOYLATION [LARGE SCALE ANALYSIS] AT LYS-270</scope>
    <scope>IDENTIFICATION BY MASS SPECTROMETRY [LARGE SCALE ANALYSIS]</scope>
</reference>
<reference key="18">
    <citation type="journal article" date="2015" name="Mol. Cell. Proteomics">
        <title>System-wide analysis of SUMOylation dynamics in response to replication stress reveals novel small ubiquitin-like modified target proteins and acceptor lysines relevant for genome stability.</title>
        <authorList>
            <person name="Xiao Z."/>
            <person name="Chang J.G."/>
            <person name="Hendriks I.A."/>
            <person name="Sigurdsson J.O."/>
            <person name="Olsen J.V."/>
            <person name="Vertegaal A.C."/>
        </authorList>
    </citation>
    <scope>SUMOYLATION [LARGE SCALE ANALYSIS] AT LYS-270 AND LYS-314</scope>
    <scope>IDENTIFICATION BY MASS SPECTROMETRY [LARGE SCALE ANALYSIS]</scope>
</reference>
<reference key="19">
    <citation type="journal article" date="2017" name="Nat. Struct. Mol. Biol.">
        <title>Site-specific mapping of the human SUMO proteome reveals co-modification with phosphorylation.</title>
        <authorList>
            <person name="Hendriks I.A."/>
            <person name="Lyon D."/>
            <person name="Young C."/>
            <person name="Jensen L.J."/>
            <person name="Vertegaal A.C."/>
            <person name="Nielsen M.L."/>
        </authorList>
    </citation>
    <scope>SUMOYLATION [LARGE SCALE ANALYSIS] AT LYS-270 AND LYS-314</scope>
    <scope>IDENTIFICATION BY MASS SPECTROMETRY [LARGE SCALE ANALYSIS]</scope>
</reference>
<reference key="20">
    <citation type="journal article" date="2021" name="Cell Discov.">
        <title>Structure of the human RNA polymerase I elongation complex.</title>
        <authorList>
            <person name="Zhao D."/>
            <person name="Liu W."/>
            <person name="Chen K."/>
            <person name="Wu Z."/>
            <person name="Yang H."/>
            <person name="Xu Y."/>
        </authorList>
    </citation>
    <scope>STRUCTURE BY ELECTRON MICROSCOPY (2.81 ANGSTROMS)</scope>
    <scope>FUNCTION OF POL I</scope>
    <scope>SUBUNIT</scope>
</reference>
<reference key="21">
    <citation type="journal article" date="2021" name="Nat. Struct. Mol. Biol.">
        <title>Cryo-EM structures of human RNA polymerase I.</title>
        <authorList>
            <person name="Misiaszek A.D."/>
            <person name="Girbig M."/>
            <person name="Grotsch H."/>
            <person name="Baudin F."/>
            <person name="Murciano B."/>
            <person name="Lafita A."/>
            <person name="Muller C.W."/>
        </authorList>
    </citation>
    <scope>STRUCTURE BY ELECTRON MICROSCOPY (2.70 ANGSTROMS)</scope>
    <scope>FUNCTION OF POL I</scope>
    <scope>SUBUNIT</scope>
</reference>
<reference key="22">
    <citation type="journal article" date="2022" name="Life. Sci Alliance">
        <title>The human RNA polymerase I structure reveals an HMG-like docking domain specific to metazoans.</title>
        <authorList>
            <person name="Daiss J.L."/>
            <person name="Pilsl M."/>
            <person name="Straub K."/>
            <person name="Bleckmann A."/>
            <person name="Hocherl M."/>
            <person name="Heiss F.B."/>
            <person name="Abascal-Palacios G."/>
            <person name="Ramsay E.P."/>
            <person name="Tluckova K."/>
            <person name="Mars J.C."/>
            <person name="Furtges T."/>
            <person name="Bruckmann A."/>
            <person name="Rudack T."/>
            <person name="Bernecky C."/>
            <person name="Lamour V."/>
            <person name="Panov K."/>
            <person name="Vannini A."/>
            <person name="Moss T."/>
            <person name="Engel C."/>
        </authorList>
    </citation>
    <scope>STRUCTURE BY ELECTRON MICROSCOPY (4.09 ANGSTROMS)</scope>
    <scope>FUNCTION OF POL I</scope>
    <scope>SUBUNIT</scope>
</reference>
<organism>
    <name type="scientific">Homo sapiens</name>
    <name type="common">Human</name>
    <dbReference type="NCBI Taxonomy" id="9606"/>
    <lineage>
        <taxon>Eukaryota</taxon>
        <taxon>Metazoa</taxon>
        <taxon>Chordata</taxon>
        <taxon>Craniata</taxon>
        <taxon>Vertebrata</taxon>
        <taxon>Euteleostomi</taxon>
        <taxon>Mammalia</taxon>
        <taxon>Eutheria</taxon>
        <taxon>Euarchontoglires</taxon>
        <taxon>Primates</taxon>
        <taxon>Haplorrhini</taxon>
        <taxon>Catarrhini</taxon>
        <taxon>Hominidae</taxon>
        <taxon>Homo</taxon>
    </lineage>
</organism>
<evidence type="ECO:0000250" key="1">
    <source>
        <dbReference type="UniProtKB" id="Q76KJ5"/>
    </source>
</evidence>
<evidence type="ECO:0000256" key="2">
    <source>
        <dbReference type="SAM" id="MobiDB-lite"/>
    </source>
</evidence>
<evidence type="ECO:0000269" key="3">
    <source>
    </source>
</evidence>
<evidence type="ECO:0000269" key="4">
    <source>
    </source>
</evidence>
<evidence type="ECO:0000269" key="5">
    <source>
    </source>
</evidence>
<evidence type="ECO:0000269" key="6">
    <source>
    </source>
</evidence>
<evidence type="ECO:0000269" key="7">
    <source>
    </source>
</evidence>
<evidence type="ECO:0000269" key="8">
    <source>
    </source>
</evidence>
<evidence type="ECO:0000269" key="9">
    <source>
    </source>
</evidence>
<evidence type="ECO:0000303" key="10">
    <source>
    </source>
</evidence>
<evidence type="ECO:0000303" key="11">
    <source>
    </source>
</evidence>
<evidence type="ECO:0000303" key="12">
    <source>
    </source>
</evidence>
<evidence type="ECO:0000305" key="13"/>
<evidence type="ECO:0000305" key="14">
    <source>
    </source>
</evidence>
<evidence type="ECO:0000312" key="15">
    <source>
        <dbReference type="HGNC" id="HGNC:24219"/>
    </source>
</evidence>
<evidence type="ECO:0007744" key="16">
    <source>
    </source>
</evidence>
<evidence type="ECO:0007744" key="17">
    <source>
    </source>
</evidence>
<evidence type="ECO:0007744" key="18">
    <source>
    </source>
</evidence>
<evidence type="ECO:0007744" key="19">
    <source>
    </source>
</evidence>
<evidence type="ECO:0007744" key="20">
    <source>
    </source>
</evidence>
<evidence type="ECO:0007744" key="21">
    <source>
    </source>
</evidence>
<evidence type="ECO:0007744" key="22">
    <source>
    </source>
</evidence>
<evidence type="ECO:0007744" key="23">
    <source>
    </source>
</evidence>
<evidence type="ECO:0007744" key="24">
    <source>
    </source>
</evidence>
<evidence type="ECO:0007744" key="25">
    <source>
    </source>
</evidence>
<evidence type="ECO:0007744" key="26">
    <source>
    </source>
</evidence>
<evidence type="ECO:0007744" key="27">
    <source>
    </source>
</evidence>
<evidence type="ECO:0007744" key="28">
    <source>
    </source>
</evidence>
<evidence type="ECO:0007829" key="29">
    <source>
        <dbReference type="PDB" id="7OB9"/>
    </source>
</evidence>
<evidence type="ECO:0007829" key="30">
    <source>
        <dbReference type="PDB" id="7OBB"/>
    </source>
</evidence>
<keyword id="KW-0002">3D-structure</keyword>
<keyword id="KW-0007">Acetylation</keyword>
<keyword id="KW-0025">Alternative splicing</keyword>
<keyword id="KW-0158">Chromosome</keyword>
<keyword id="KW-0240">DNA-directed RNA polymerase</keyword>
<keyword id="KW-1017">Isopeptide bond</keyword>
<keyword id="KW-0539">Nucleus</keyword>
<keyword id="KW-0597">Phosphoprotein</keyword>
<keyword id="KW-1267">Proteomics identification</keyword>
<keyword id="KW-1185">Reference proteome</keyword>
<keyword id="KW-0804">Transcription</keyword>
<keyword id="KW-0832">Ubl conjugation</keyword>
<name>RPA34_HUMAN</name>
<dbReference type="EMBL" id="U86751">
    <property type="protein sequence ID" value="AAB68608.1"/>
    <property type="molecule type" value="mRNA"/>
</dbReference>
<dbReference type="EMBL" id="AF017633">
    <property type="protein sequence ID" value="AAD41158.1"/>
    <property type="molecule type" value="mRNA"/>
</dbReference>
<dbReference type="EMBL" id="BC038992">
    <property type="protein sequence ID" value="AAH38992.1"/>
    <property type="molecule type" value="mRNA"/>
</dbReference>
<dbReference type="EMBL" id="BC054044">
    <property type="protein sequence ID" value="AAH54044.1"/>
    <property type="molecule type" value="mRNA"/>
</dbReference>
<dbReference type="EMBL" id="BC108889">
    <property type="protein sequence ID" value="AAI08890.1"/>
    <property type="molecule type" value="mRNA"/>
</dbReference>
<dbReference type="CCDS" id="CCDS12661.1">
    <molecule id="O15446-1"/>
</dbReference>
<dbReference type="CCDS" id="CCDS74397.1">
    <molecule id="O15446-2"/>
</dbReference>
<dbReference type="RefSeq" id="NP_001284519.1">
    <molecule id="O15446-2"/>
    <property type="nucleotide sequence ID" value="NM_001297590.3"/>
</dbReference>
<dbReference type="RefSeq" id="NP_036231.1">
    <molecule id="O15446-1"/>
    <property type="nucleotide sequence ID" value="NM_012099.3"/>
</dbReference>
<dbReference type="PDB" id="7OB9">
    <property type="method" value="EM"/>
    <property type="resolution" value="2.70 A"/>
    <property type="chains" value="N=1-510"/>
</dbReference>
<dbReference type="PDB" id="7OBA">
    <property type="method" value="EM"/>
    <property type="resolution" value="3.10 A"/>
    <property type="chains" value="N=1-510"/>
</dbReference>
<dbReference type="PDB" id="7OBB">
    <property type="method" value="EM"/>
    <property type="resolution" value="3.30 A"/>
    <property type="chains" value="N=1-510"/>
</dbReference>
<dbReference type="PDB" id="7VBA">
    <property type="method" value="EM"/>
    <property type="resolution" value="2.89 A"/>
    <property type="chains" value="N=1-510"/>
</dbReference>
<dbReference type="PDB" id="7VBB">
    <property type="method" value="EM"/>
    <property type="resolution" value="2.81 A"/>
    <property type="chains" value="N=1-510"/>
</dbReference>
<dbReference type="PDB" id="7VBC">
    <property type="method" value="EM"/>
    <property type="resolution" value="3.01 A"/>
    <property type="chains" value="N=1-510"/>
</dbReference>
<dbReference type="PDB" id="8A43">
    <property type="method" value="EM"/>
    <property type="resolution" value="4.09 A"/>
    <property type="chains" value="M=1-510"/>
</dbReference>
<dbReference type="PDBsum" id="7OB9"/>
<dbReference type="PDBsum" id="7OBA"/>
<dbReference type="PDBsum" id="7OBB"/>
<dbReference type="PDBsum" id="7VBA"/>
<dbReference type="PDBsum" id="7VBB"/>
<dbReference type="PDBsum" id="7VBC"/>
<dbReference type="PDBsum" id="8A43"/>
<dbReference type="EMDB" id="EMD-12795"/>
<dbReference type="EMDB" id="EMD-12796"/>
<dbReference type="EMDB" id="EMD-12797"/>
<dbReference type="EMDB" id="EMD-15135"/>
<dbReference type="EMDB" id="EMD-31876"/>
<dbReference type="EMDB" id="EMD-31877"/>
<dbReference type="EMDB" id="EMD-31878"/>
<dbReference type="SMR" id="O15446"/>
<dbReference type="BioGRID" id="116060">
    <property type="interactions" value="593"/>
</dbReference>
<dbReference type="ComplexPortal" id="CPX-2386">
    <property type="entry name" value="DNA-directed RNA polymerase I complex"/>
</dbReference>
<dbReference type="CORUM" id="O15446"/>
<dbReference type="DIP" id="DIP-27616N"/>
<dbReference type="FunCoup" id="O15446">
    <property type="interactions" value="1293"/>
</dbReference>
<dbReference type="IntAct" id="O15446">
    <property type="interactions" value="60"/>
</dbReference>
<dbReference type="MINT" id="O15446"/>
<dbReference type="STRING" id="9606.ENSP00000465099"/>
<dbReference type="GlyGen" id="O15446">
    <property type="glycosylation" value="1 site, 1 O-linked glycan (1 site)"/>
</dbReference>
<dbReference type="iPTMnet" id="O15446"/>
<dbReference type="MetOSite" id="O15446"/>
<dbReference type="PhosphoSitePlus" id="O15446"/>
<dbReference type="SwissPalm" id="O15446"/>
<dbReference type="BioMuta" id="CD3EAP"/>
<dbReference type="CPTAC" id="CPTAC-920"/>
<dbReference type="CPTAC" id="CPTAC-921"/>
<dbReference type="jPOST" id="O15446"/>
<dbReference type="MassIVE" id="O15446"/>
<dbReference type="PaxDb" id="9606-ENSP00000465099"/>
<dbReference type="PeptideAtlas" id="O15446"/>
<dbReference type="ProteomicsDB" id="48675">
    <molecule id="O15446-1"/>
</dbReference>
<dbReference type="ProteomicsDB" id="48676">
    <molecule id="O15446-2"/>
</dbReference>
<dbReference type="Pumba" id="O15446"/>
<dbReference type="Antibodypedia" id="17932">
    <property type="antibodies" value="302 antibodies from 29 providers"/>
</dbReference>
<dbReference type="DNASU" id="10849"/>
<dbReference type="Ensembl" id="ENST00000309424.8">
    <molecule id="O15446-1"/>
    <property type="protein sequence ID" value="ENSP00000310966.3"/>
    <property type="gene ID" value="ENSG00000117877.11"/>
</dbReference>
<dbReference type="Ensembl" id="ENST00000589804.1">
    <molecule id="O15446-2"/>
    <property type="protein sequence ID" value="ENSP00000465099.1"/>
    <property type="gene ID" value="ENSG00000117877.11"/>
</dbReference>
<dbReference type="GeneID" id="10849"/>
<dbReference type="KEGG" id="hsa:10849"/>
<dbReference type="MANE-Select" id="ENST00000309424.8">
    <property type="protein sequence ID" value="ENSP00000310966.3"/>
    <property type="RefSeq nucleotide sequence ID" value="NM_012099.3"/>
    <property type="RefSeq protein sequence ID" value="NP_036231.1"/>
</dbReference>
<dbReference type="UCSC" id="uc002pbq.1">
    <molecule id="O15446-1"/>
    <property type="organism name" value="human"/>
</dbReference>
<dbReference type="AGR" id="HGNC:24219"/>
<dbReference type="CTD" id="10849"/>
<dbReference type="DisGeNET" id="10849"/>
<dbReference type="GeneCards" id="POLR1G"/>
<dbReference type="HGNC" id="HGNC:24219">
    <property type="gene designation" value="POLR1G"/>
</dbReference>
<dbReference type="HPA" id="ENSG00000117877">
    <property type="expression patterns" value="Low tissue specificity"/>
</dbReference>
<dbReference type="MIM" id="107325">
    <property type="type" value="gene"/>
</dbReference>
<dbReference type="neXtProt" id="NX_O15446"/>
<dbReference type="OpenTargets" id="ENSG00000117877"/>
<dbReference type="PharmGKB" id="PA142672156"/>
<dbReference type="VEuPathDB" id="HostDB:ENSG00000117877"/>
<dbReference type="eggNOG" id="ENOG502S2W3">
    <property type="taxonomic scope" value="Eukaryota"/>
</dbReference>
<dbReference type="GeneTree" id="ENSGT00450000040362"/>
<dbReference type="HOGENOM" id="CLU_035235_0_0_1"/>
<dbReference type="InParanoid" id="O15446"/>
<dbReference type="OMA" id="RIFDGPQ"/>
<dbReference type="OrthoDB" id="10071093at2759"/>
<dbReference type="PAN-GO" id="O15446">
    <property type="GO annotations" value="1 GO annotation based on evolutionary models"/>
</dbReference>
<dbReference type="PhylomeDB" id="O15446"/>
<dbReference type="TreeFam" id="TF338162"/>
<dbReference type="PathwayCommons" id="O15446"/>
<dbReference type="Reactome" id="R-HSA-427413">
    <property type="pathway name" value="NoRC negatively regulates rRNA expression"/>
</dbReference>
<dbReference type="Reactome" id="R-HSA-5250924">
    <property type="pathway name" value="B-WICH complex positively regulates rRNA expression"/>
</dbReference>
<dbReference type="Reactome" id="R-HSA-73762">
    <property type="pathway name" value="RNA Polymerase I Transcription Initiation"/>
</dbReference>
<dbReference type="Reactome" id="R-HSA-73772">
    <property type="pathway name" value="RNA Polymerase I Promoter Escape"/>
</dbReference>
<dbReference type="Reactome" id="R-HSA-73863">
    <property type="pathway name" value="RNA Polymerase I Transcription Termination"/>
</dbReference>
<dbReference type="SignaLink" id="O15446"/>
<dbReference type="SIGNOR" id="O15446"/>
<dbReference type="BioGRID-ORCS" id="10849">
    <property type="hits" value="330 hits in 1158 CRISPR screens"/>
</dbReference>
<dbReference type="CD-CODE" id="91857CE7">
    <property type="entry name" value="Nucleolus"/>
</dbReference>
<dbReference type="ChiTaRS" id="CD3EAP">
    <property type="organism name" value="human"/>
</dbReference>
<dbReference type="GeneWiki" id="CD3EAP"/>
<dbReference type="GenomeRNAi" id="10849"/>
<dbReference type="Pharos" id="O15446">
    <property type="development level" value="Tbio"/>
</dbReference>
<dbReference type="PRO" id="PR:O15446"/>
<dbReference type="Proteomes" id="UP000005640">
    <property type="component" value="Chromosome 19"/>
</dbReference>
<dbReference type="RNAct" id="O15446">
    <property type="molecule type" value="protein"/>
</dbReference>
<dbReference type="Bgee" id="ENSG00000117877">
    <property type="expression patterns" value="Expressed in primordial germ cell in gonad and 167 other cell types or tissues"/>
</dbReference>
<dbReference type="ExpressionAtlas" id="O15446">
    <property type="expression patterns" value="baseline and differential"/>
</dbReference>
<dbReference type="GO" id="GO:0005694">
    <property type="term" value="C:chromosome"/>
    <property type="evidence" value="ECO:0007669"/>
    <property type="project" value="UniProtKB-SubCell"/>
</dbReference>
<dbReference type="GO" id="GO:0005829">
    <property type="term" value="C:cytosol"/>
    <property type="evidence" value="ECO:0000314"/>
    <property type="project" value="HPA"/>
</dbReference>
<dbReference type="GO" id="GO:0001650">
    <property type="term" value="C:fibrillar center"/>
    <property type="evidence" value="ECO:0000314"/>
    <property type="project" value="HPA"/>
</dbReference>
<dbReference type="GO" id="GO:0005739">
    <property type="term" value="C:mitochondrion"/>
    <property type="evidence" value="ECO:0000314"/>
    <property type="project" value="HPA"/>
</dbReference>
<dbReference type="GO" id="GO:0005730">
    <property type="term" value="C:nucleolus"/>
    <property type="evidence" value="ECO:0000304"/>
    <property type="project" value="ProtInc"/>
</dbReference>
<dbReference type="GO" id="GO:0005654">
    <property type="term" value="C:nucleoplasm"/>
    <property type="evidence" value="ECO:0000314"/>
    <property type="project" value="HPA"/>
</dbReference>
<dbReference type="GO" id="GO:0005736">
    <property type="term" value="C:RNA polymerase I complex"/>
    <property type="evidence" value="ECO:0000314"/>
    <property type="project" value="UniProtKB"/>
</dbReference>
<dbReference type="GO" id="GO:0000120">
    <property type="term" value="C:RNA polymerase I transcription regulator complex"/>
    <property type="evidence" value="ECO:0000304"/>
    <property type="project" value="ProtInc"/>
</dbReference>
<dbReference type="GO" id="GO:0003723">
    <property type="term" value="F:RNA binding"/>
    <property type="evidence" value="ECO:0007005"/>
    <property type="project" value="UniProtKB"/>
</dbReference>
<dbReference type="GO" id="GO:0007169">
    <property type="term" value="P:cell surface receptor protein tyrosine kinase signaling pathway"/>
    <property type="evidence" value="ECO:0000304"/>
    <property type="project" value="ProtInc"/>
</dbReference>
<dbReference type="GO" id="GO:0009303">
    <property type="term" value="P:rRNA transcription"/>
    <property type="evidence" value="ECO:0000304"/>
    <property type="project" value="ProtInc"/>
</dbReference>
<dbReference type="GO" id="GO:0006361">
    <property type="term" value="P:transcription initiation at RNA polymerase I promoter"/>
    <property type="evidence" value="ECO:0000314"/>
    <property type="project" value="UniProtKB"/>
</dbReference>
<dbReference type="FunFam" id="6.20.250.70:FF:000001">
    <property type="entry name" value="DNA-directed RNA polymerase I subunit RPA34"/>
    <property type="match status" value="1"/>
</dbReference>
<dbReference type="Gene3D" id="6.20.250.70">
    <property type="match status" value="1"/>
</dbReference>
<dbReference type="InterPro" id="IPR013240">
    <property type="entry name" value="DNA-dir_RNA_pol1_su_RPA34"/>
</dbReference>
<dbReference type="PANTHER" id="PTHR15484">
    <property type="entry name" value="DNA-DIRECTED RNA POLYMERASE I SUBUNIT RPA34"/>
    <property type="match status" value="1"/>
</dbReference>
<dbReference type="PANTHER" id="PTHR15484:SF8">
    <property type="entry name" value="DNA-DIRECTED RNA POLYMERASE I SUBUNIT RPA34"/>
    <property type="match status" value="1"/>
</dbReference>
<dbReference type="Pfam" id="PF08208">
    <property type="entry name" value="RNA_polI_A34"/>
    <property type="match status" value="1"/>
</dbReference>
<sequence>MEEPQAGDAARFSCPPNFTAKPPASESPRFSLEALTGPDTELWLIQAPADFAPECFNGRHVPLSGSQIVKGKLAGKRHRYRVLSSCPQAGEATLLAPSTEAGGGLTCASAPQGTLRILEGPQQSLSGSPLQPIPASPPPQIPPGLRPRFCAFGGNPPVTGPRSALAPNLLTSGKKKKEMQVTEAPVTQEAVNGHGALEVDMALGSPEMDVRKKKKKKNQQLKEPEAAGPVGTEPTVETLEPLGVLFPSTTKKRKKPKGKETFEPEDKTVKQEQINTEPLEDTVLSPTKKRKRQKGTEGMEPEEGVTVESQPQVKVEPLEEAIPLPPTKKRKKEKGQMAMMEPGTEAMEPVEPEMKPLESPGGTMAPQQPEGAKPQAQAALAAPKKKTKKEKQQDATVEPETEVVGPELPDDLEPQAAPTSTKKKKKKKERGHTVTEPIQPLEPELPGEGQPEARATPGSTKKRKKQSQESRMPETVPQEEMPGPPLNSESGEEAPTGRDKKRKQQQQQPV</sequence>